<accession>A4Y198</accession>
<organism>
    <name type="scientific">Ectopseudomonas mendocina (strain ymp)</name>
    <name type="common">Pseudomonas mendocina</name>
    <dbReference type="NCBI Taxonomy" id="399739"/>
    <lineage>
        <taxon>Bacteria</taxon>
        <taxon>Pseudomonadati</taxon>
        <taxon>Pseudomonadota</taxon>
        <taxon>Gammaproteobacteria</taxon>
        <taxon>Pseudomonadales</taxon>
        <taxon>Pseudomonadaceae</taxon>
        <taxon>Ectopseudomonas</taxon>
    </lineage>
</organism>
<evidence type="ECO:0000255" key="1">
    <source>
        <dbReference type="HAMAP-Rule" id="MF_00129"/>
    </source>
</evidence>
<comment type="function">
    <text evidence="1">NAD-binding protein involved in the addition of a carboxymethylaminomethyl (cmnm) group at the wobble position (U34) of certain tRNAs, forming tRNA-cmnm(5)s(2)U34.</text>
</comment>
<comment type="cofactor">
    <cofactor evidence="1">
        <name>FAD</name>
        <dbReference type="ChEBI" id="CHEBI:57692"/>
    </cofactor>
</comment>
<comment type="subunit">
    <text evidence="1">Homodimer. Heterotetramer of two MnmE and two MnmG subunits.</text>
</comment>
<comment type="subcellular location">
    <subcellularLocation>
        <location evidence="1">Cytoplasm</location>
    </subcellularLocation>
</comment>
<comment type="similarity">
    <text evidence="1">Belongs to the MnmG family.</text>
</comment>
<name>MNMG_ECTM1</name>
<proteinExistence type="inferred from homology"/>
<gene>
    <name evidence="1" type="primary">mnmG</name>
    <name evidence="1" type="synonym">gidA</name>
    <name type="ordered locus">Pmen_4618</name>
</gene>
<dbReference type="EMBL" id="CP000680">
    <property type="protein sequence ID" value="ABP87364.1"/>
    <property type="molecule type" value="Genomic_DNA"/>
</dbReference>
<dbReference type="SMR" id="A4Y198"/>
<dbReference type="STRING" id="399739.Pmen_4618"/>
<dbReference type="KEGG" id="pmy:Pmen_4618"/>
<dbReference type="PATRIC" id="fig|399739.8.peg.4683"/>
<dbReference type="eggNOG" id="COG0445">
    <property type="taxonomic scope" value="Bacteria"/>
</dbReference>
<dbReference type="HOGENOM" id="CLU_007831_2_2_6"/>
<dbReference type="OrthoDB" id="9815560at2"/>
<dbReference type="GO" id="GO:0005829">
    <property type="term" value="C:cytosol"/>
    <property type="evidence" value="ECO:0007669"/>
    <property type="project" value="TreeGrafter"/>
</dbReference>
<dbReference type="GO" id="GO:0050660">
    <property type="term" value="F:flavin adenine dinucleotide binding"/>
    <property type="evidence" value="ECO:0007669"/>
    <property type="project" value="UniProtKB-UniRule"/>
</dbReference>
<dbReference type="GO" id="GO:0030488">
    <property type="term" value="P:tRNA methylation"/>
    <property type="evidence" value="ECO:0007669"/>
    <property type="project" value="TreeGrafter"/>
</dbReference>
<dbReference type="GO" id="GO:0002098">
    <property type="term" value="P:tRNA wobble uridine modification"/>
    <property type="evidence" value="ECO:0007669"/>
    <property type="project" value="InterPro"/>
</dbReference>
<dbReference type="FunFam" id="1.10.10.1800:FF:000001">
    <property type="entry name" value="tRNA uridine 5-carboxymethylaminomethyl modification enzyme MnmG"/>
    <property type="match status" value="1"/>
</dbReference>
<dbReference type="FunFam" id="1.10.150.570:FF:000001">
    <property type="entry name" value="tRNA uridine 5-carboxymethylaminomethyl modification enzyme MnmG"/>
    <property type="match status" value="1"/>
</dbReference>
<dbReference type="FunFam" id="3.50.50.60:FF:000002">
    <property type="entry name" value="tRNA uridine 5-carboxymethylaminomethyl modification enzyme MnmG"/>
    <property type="match status" value="1"/>
</dbReference>
<dbReference type="FunFam" id="3.50.50.60:FF:000010">
    <property type="entry name" value="tRNA uridine 5-carboxymethylaminomethyl modification enzyme MnmG"/>
    <property type="match status" value="1"/>
</dbReference>
<dbReference type="Gene3D" id="3.50.50.60">
    <property type="entry name" value="FAD/NAD(P)-binding domain"/>
    <property type="match status" value="2"/>
</dbReference>
<dbReference type="Gene3D" id="1.10.150.570">
    <property type="entry name" value="GidA associated domain, C-terminal subdomain"/>
    <property type="match status" value="1"/>
</dbReference>
<dbReference type="Gene3D" id="1.10.10.1800">
    <property type="entry name" value="tRNA uridine 5-carboxymethylaminomethyl modification enzyme MnmG/GidA"/>
    <property type="match status" value="1"/>
</dbReference>
<dbReference type="HAMAP" id="MF_00129">
    <property type="entry name" value="MnmG_GidA"/>
    <property type="match status" value="1"/>
</dbReference>
<dbReference type="InterPro" id="IPR036188">
    <property type="entry name" value="FAD/NAD-bd_sf"/>
</dbReference>
<dbReference type="InterPro" id="IPR049312">
    <property type="entry name" value="GIDA_C_N"/>
</dbReference>
<dbReference type="InterPro" id="IPR004416">
    <property type="entry name" value="MnmG"/>
</dbReference>
<dbReference type="InterPro" id="IPR002218">
    <property type="entry name" value="MnmG-rel"/>
</dbReference>
<dbReference type="InterPro" id="IPR020595">
    <property type="entry name" value="MnmG-rel_CS"/>
</dbReference>
<dbReference type="InterPro" id="IPR026904">
    <property type="entry name" value="MnmG_C"/>
</dbReference>
<dbReference type="InterPro" id="IPR047001">
    <property type="entry name" value="MnmG_C_subdom"/>
</dbReference>
<dbReference type="InterPro" id="IPR044920">
    <property type="entry name" value="MnmG_C_subdom_sf"/>
</dbReference>
<dbReference type="InterPro" id="IPR040131">
    <property type="entry name" value="MnmG_N"/>
</dbReference>
<dbReference type="NCBIfam" id="TIGR00136">
    <property type="entry name" value="mnmG_gidA"/>
    <property type="match status" value="1"/>
</dbReference>
<dbReference type="PANTHER" id="PTHR11806">
    <property type="entry name" value="GLUCOSE INHIBITED DIVISION PROTEIN A"/>
    <property type="match status" value="1"/>
</dbReference>
<dbReference type="PANTHER" id="PTHR11806:SF0">
    <property type="entry name" value="PROTEIN MTO1 HOMOLOG, MITOCHONDRIAL"/>
    <property type="match status" value="1"/>
</dbReference>
<dbReference type="Pfam" id="PF01134">
    <property type="entry name" value="GIDA"/>
    <property type="match status" value="1"/>
</dbReference>
<dbReference type="Pfam" id="PF21680">
    <property type="entry name" value="GIDA_C_1st"/>
    <property type="match status" value="1"/>
</dbReference>
<dbReference type="Pfam" id="PF13932">
    <property type="entry name" value="SAM_GIDA_C"/>
    <property type="match status" value="1"/>
</dbReference>
<dbReference type="SMART" id="SM01228">
    <property type="entry name" value="GIDA_assoc_3"/>
    <property type="match status" value="1"/>
</dbReference>
<dbReference type="SUPFAM" id="SSF51905">
    <property type="entry name" value="FAD/NAD(P)-binding domain"/>
    <property type="match status" value="1"/>
</dbReference>
<dbReference type="PROSITE" id="PS01280">
    <property type="entry name" value="GIDA_1"/>
    <property type="match status" value="1"/>
</dbReference>
<keyword id="KW-0963">Cytoplasm</keyword>
<keyword id="KW-0274">FAD</keyword>
<keyword id="KW-0285">Flavoprotein</keyword>
<keyword id="KW-0520">NAD</keyword>
<keyword id="KW-0819">tRNA processing</keyword>
<reference key="1">
    <citation type="submission" date="2007-04" db="EMBL/GenBank/DDBJ databases">
        <title>Complete sequence of Pseudomonas mendocina ymp.</title>
        <authorList>
            <consortium name="US DOE Joint Genome Institute"/>
            <person name="Copeland A."/>
            <person name="Lucas S."/>
            <person name="Lapidus A."/>
            <person name="Barry K."/>
            <person name="Glavina del Rio T."/>
            <person name="Dalin E."/>
            <person name="Tice H."/>
            <person name="Pitluck S."/>
            <person name="Kiss H."/>
            <person name="Brettin T."/>
            <person name="Detter J.C."/>
            <person name="Bruce D."/>
            <person name="Han C."/>
            <person name="Schmutz J."/>
            <person name="Larimer F."/>
            <person name="Land M."/>
            <person name="Hauser L."/>
            <person name="Kyrpides N."/>
            <person name="Mikhailova N."/>
            <person name="Hersman L."/>
            <person name="Dubois J."/>
            <person name="Maurice P."/>
            <person name="Richardson P."/>
        </authorList>
    </citation>
    <scope>NUCLEOTIDE SEQUENCE [LARGE SCALE GENOMIC DNA]</scope>
    <source>
        <strain>ymp</strain>
    </source>
</reference>
<feature type="chain" id="PRO_1000016647" description="tRNA uridine 5-carboxymethylaminomethyl modification enzyme MnmG">
    <location>
        <begin position="1"/>
        <end position="630"/>
    </location>
</feature>
<feature type="binding site" evidence="1">
    <location>
        <begin position="13"/>
        <end position="18"/>
    </location>
    <ligand>
        <name>FAD</name>
        <dbReference type="ChEBI" id="CHEBI:57692"/>
    </ligand>
</feature>
<feature type="binding site" evidence="1">
    <location>
        <begin position="273"/>
        <end position="287"/>
    </location>
    <ligand>
        <name>NAD(+)</name>
        <dbReference type="ChEBI" id="CHEBI:57540"/>
    </ligand>
</feature>
<protein>
    <recommendedName>
        <fullName evidence="1">tRNA uridine 5-carboxymethylaminomethyl modification enzyme MnmG</fullName>
    </recommendedName>
    <alternativeName>
        <fullName evidence="1">Glucose-inhibited division protein A</fullName>
    </alternativeName>
</protein>
<sequence>MDFPSRFDVIVIGGGHAGTEAALAAARMGVKTLLLTHNVETLGQMSCNPAIGGIGKSHLVKEIDALGGAMATATDKGGIQFRILNSRKGPAVRATRAQADRVLYKAAVREILENQANLWIFQQAADDLIVENAQVKGVVTQMGLRFHADSVVLTTGTFLGGLIHIGLQNYSGGRAGDPPSMALAHRLRELPLRVGRLKTGTPPRIDGRSVDFSVMTEQPGDTPTPLMSFLGKREHQPKQISCWITHTNARTHEIIAANLDRSPMYSGVIEGVGPRYCPSIEDKIHRFADKDSHQVFIEPEGLTTHELYPNGISTSLPFDVQLQIVRSIRGMENAHIVRPGYAIEYDYFDPRDLKYSLETKVIGGLFFAGQINGTTGYEEAGAQGLLAGCNAALRAQGKEAWCPRRDEAYIGVLVDDLITLGTQEPYRMFTSRAEYRLILREDNADLRLTEKGRELGLVDDERWAAFEAKREGIVREEQRLKSTWVRPGTPQGDAIAARFGTPLAHEYNLLNLLARPEIDYAALAEITESPAVDNQVAEQVEIKTKYAGYIDRQQDEIARLRASEDTKLPEDLDYSAISGLSKEIQFKLGNTRPATLGQAGRIPGVTPAAISLLLIHLKKRSAGQKLEQSA</sequence>